<feature type="chain" id="PRO_1000009309" description="Leucine--tRNA ligase">
    <location>
        <begin position="1"/>
        <end position="864"/>
    </location>
</feature>
<feature type="short sequence motif" description="'HIGH' region">
    <location>
        <begin position="42"/>
        <end position="52"/>
    </location>
</feature>
<feature type="short sequence motif" description="'KMSKS' region">
    <location>
        <begin position="624"/>
        <end position="628"/>
    </location>
</feature>
<feature type="binding site" evidence="1">
    <location>
        <position position="627"/>
    </location>
    <ligand>
        <name>ATP</name>
        <dbReference type="ChEBI" id="CHEBI:30616"/>
    </ligand>
</feature>
<gene>
    <name evidence="1" type="primary">leuS</name>
    <name type="ordered locus">BMASAVP1_A0370</name>
</gene>
<keyword id="KW-0030">Aminoacyl-tRNA synthetase</keyword>
<keyword id="KW-0067">ATP-binding</keyword>
<keyword id="KW-0963">Cytoplasm</keyword>
<keyword id="KW-0436">Ligase</keyword>
<keyword id="KW-0547">Nucleotide-binding</keyword>
<keyword id="KW-0648">Protein biosynthesis</keyword>
<organism>
    <name type="scientific">Burkholderia mallei (strain SAVP1)</name>
    <dbReference type="NCBI Taxonomy" id="320388"/>
    <lineage>
        <taxon>Bacteria</taxon>
        <taxon>Pseudomonadati</taxon>
        <taxon>Pseudomonadota</taxon>
        <taxon>Betaproteobacteria</taxon>
        <taxon>Burkholderiales</taxon>
        <taxon>Burkholderiaceae</taxon>
        <taxon>Burkholderia</taxon>
        <taxon>pseudomallei group</taxon>
    </lineage>
</organism>
<reference key="1">
    <citation type="journal article" date="2010" name="Genome Biol. Evol.">
        <title>Continuing evolution of Burkholderia mallei through genome reduction and large-scale rearrangements.</title>
        <authorList>
            <person name="Losada L."/>
            <person name="Ronning C.M."/>
            <person name="DeShazer D."/>
            <person name="Woods D."/>
            <person name="Fedorova N."/>
            <person name="Kim H.S."/>
            <person name="Shabalina S.A."/>
            <person name="Pearson T.R."/>
            <person name="Brinkac L."/>
            <person name="Tan P."/>
            <person name="Nandi T."/>
            <person name="Crabtree J."/>
            <person name="Badger J."/>
            <person name="Beckstrom-Sternberg S."/>
            <person name="Saqib M."/>
            <person name="Schutzer S.E."/>
            <person name="Keim P."/>
            <person name="Nierman W.C."/>
        </authorList>
    </citation>
    <scope>NUCLEOTIDE SEQUENCE [LARGE SCALE GENOMIC DNA]</scope>
    <source>
        <strain>SAVP1</strain>
    </source>
</reference>
<comment type="catalytic activity">
    <reaction evidence="1">
        <text>tRNA(Leu) + L-leucine + ATP = L-leucyl-tRNA(Leu) + AMP + diphosphate</text>
        <dbReference type="Rhea" id="RHEA:11688"/>
        <dbReference type="Rhea" id="RHEA-COMP:9613"/>
        <dbReference type="Rhea" id="RHEA-COMP:9622"/>
        <dbReference type="ChEBI" id="CHEBI:30616"/>
        <dbReference type="ChEBI" id="CHEBI:33019"/>
        <dbReference type="ChEBI" id="CHEBI:57427"/>
        <dbReference type="ChEBI" id="CHEBI:78442"/>
        <dbReference type="ChEBI" id="CHEBI:78494"/>
        <dbReference type="ChEBI" id="CHEBI:456215"/>
        <dbReference type="EC" id="6.1.1.4"/>
    </reaction>
</comment>
<comment type="subcellular location">
    <subcellularLocation>
        <location evidence="1">Cytoplasm</location>
    </subcellularLocation>
</comment>
<comment type="similarity">
    <text evidence="1">Belongs to the class-I aminoacyl-tRNA synthetase family.</text>
</comment>
<name>SYL_BURMS</name>
<protein>
    <recommendedName>
        <fullName evidence="1">Leucine--tRNA ligase</fullName>
        <ecNumber evidence="1">6.1.1.4</ecNumber>
    </recommendedName>
    <alternativeName>
        <fullName evidence="1">Leucyl-tRNA synthetase</fullName>
        <shortName evidence="1">LeuRS</shortName>
    </alternativeName>
</protein>
<evidence type="ECO:0000255" key="1">
    <source>
        <dbReference type="HAMAP-Rule" id="MF_00049"/>
    </source>
</evidence>
<sequence length="864" mass="96193">MHERYVPADVEAAAQSDWRAADAYRSKEDANRKKFYCVSMLPYPSGKLHMGHVRNYTINDVMYRYLRMNGYNTLMPMGWDAFGMPAENAAMANGVPPAQWTYENIAYMKKQMQAMGLAIDWSREVTTCKPDYYKWNQWLFLKMLEKGVAYKKTGTVNWDPVDQTVLANEQVIDGRGWRSGAFVEKREIPMYYMRITQYADELLNDLDGLGWPERVKVMQHNWIGKSFGVNFGFPYELDGEKKLLRVFTTRADTIMGVTFCAIAAEHPLAARLARDKPALQAFIDECKRGGVAEADIATMEKKGVATGFSVSHPLTGEPVEVWIGNYVLMSYGEGAVMGVPAHDERDFAFAKKYGLPIRQVIAVEGETYSTDAWQEWYGDKTRAVCVNSGKYDGLAYDAAVDAIAAELKAGGLGDKQITYRLRDWGISRQRYWGTPIPIIHCPSCGDVPVPEQDLPVVLPEDLVPDGTGNPLAKSDAFLNCTCPKCGAVAKRETDTMDTFVDSAWYFSRYAAPDAQTMVDARTDYWMPMDQYIGGIEHAILHLLYSRFWAKVMRDLGLVAFGEPAKNLLTQGMVLNETFYREDAAGKKTWYNPADVTVSFDDKGRPVGAVLKSDGQPVELGGIEKMSKSKNNGVDPQMLIDHYGADTARLFTMFAAPPEQQLEWSGAGVDGASRFLRRVWAFGFANREALAVRAPFDAAQLAEAGKTLRREIHGVLKQADFDYQRLQYNTVVSAAMKMLNAIEGAKGATPAVLRETYGVLLRVLYPVVPHVTFELWKVLGYADEFGPLLDAPWPKVDEAALEQAEIELVLQVNGKVRGALKVAKDASREAIEAAAVADGMFAKFAEGRPAKKIIVVPGRLVNVVV</sequence>
<dbReference type="EC" id="6.1.1.4" evidence="1"/>
<dbReference type="EMBL" id="CP000526">
    <property type="protein sequence ID" value="ABM50487.1"/>
    <property type="molecule type" value="Genomic_DNA"/>
</dbReference>
<dbReference type="RefSeq" id="WP_004194387.1">
    <property type="nucleotide sequence ID" value="NC_008785.1"/>
</dbReference>
<dbReference type="SMR" id="A1V0G7"/>
<dbReference type="GeneID" id="92980145"/>
<dbReference type="KEGG" id="bmv:BMASAVP1_A0370"/>
<dbReference type="HOGENOM" id="CLU_004427_0_0_4"/>
<dbReference type="GO" id="GO:0005829">
    <property type="term" value="C:cytosol"/>
    <property type="evidence" value="ECO:0007669"/>
    <property type="project" value="TreeGrafter"/>
</dbReference>
<dbReference type="GO" id="GO:0002161">
    <property type="term" value="F:aminoacyl-tRNA deacylase activity"/>
    <property type="evidence" value="ECO:0007669"/>
    <property type="project" value="InterPro"/>
</dbReference>
<dbReference type="GO" id="GO:0005524">
    <property type="term" value="F:ATP binding"/>
    <property type="evidence" value="ECO:0007669"/>
    <property type="project" value="UniProtKB-UniRule"/>
</dbReference>
<dbReference type="GO" id="GO:0004823">
    <property type="term" value="F:leucine-tRNA ligase activity"/>
    <property type="evidence" value="ECO:0007669"/>
    <property type="project" value="UniProtKB-UniRule"/>
</dbReference>
<dbReference type="GO" id="GO:0006429">
    <property type="term" value="P:leucyl-tRNA aminoacylation"/>
    <property type="evidence" value="ECO:0007669"/>
    <property type="project" value="UniProtKB-UniRule"/>
</dbReference>
<dbReference type="CDD" id="cd07958">
    <property type="entry name" value="Anticodon_Ia_Leu_BEm"/>
    <property type="match status" value="1"/>
</dbReference>
<dbReference type="CDD" id="cd00812">
    <property type="entry name" value="LeuRS_core"/>
    <property type="match status" value="1"/>
</dbReference>
<dbReference type="FunFam" id="1.10.730.10:FF:000002">
    <property type="entry name" value="Leucine--tRNA ligase"/>
    <property type="match status" value="1"/>
</dbReference>
<dbReference type="FunFam" id="2.20.28.290:FF:000001">
    <property type="entry name" value="Leucine--tRNA ligase"/>
    <property type="match status" value="1"/>
</dbReference>
<dbReference type="FunFam" id="3.40.50.620:FF:000003">
    <property type="entry name" value="Leucine--tRNA ligase"/>
    <property type="match status" value="1"/>
</dbReference>
<dbReference type="FunFam" id="3.40.50.620:FF:000056">
    <property type="entry name" value="Leucine--tRNA ligase"/>
    <property type="match status" value="1"/>
</dbReference>
<dbReference type="FunFam" id="3.90.740.10:FF:000012">
    <property type="entry name" value="Leucine--tRNA ligase"/>
    <property type="match status" value="1"/>
</dbReference>
<dbReference type="Gene3D" id="2.20.28.290">
    <property type="match status" value="1"/>
</dbReference>
<dbReference type="Gene3D" id="3.10.20.590">
    <property type="match status" value="1"/>
</dbReference>
<dbReference type="Gene3D" id="3.40.50.620">
    <property type="entry name" value="HUPs"/>
    <property type="match status" value="2"/>
</dbReference>
<dbReference type="Gene3D" id="1.10.730.10">
    <property type="entry name" value="Isoleucyl-tRNA Synthetase, Domain 1"/>
    <property type="match status" value="1"/>
</dbReference>
<dbReference type="Gene3D" id="3.90.740.10">
    <property type="entry name" value="Valyl/Leucyl/Isoleucyl-tRNA synthetase, editing domain"/>
    <property type="match status" value="1"/>
</dbReference>
<dbReference type="HAMAP" id="MF_00049_B">
    <property type="entry name" value="Leu_tRNA_synth_B"/>
    <property type="match status" value="1"/>
</dbReference>
<dbReference type="InterPro" id="IPR001412">
    <property type="entry name" value="aa-tRNA-synth_I_CS"/>
</dbReference>
<dbReference type="InterPro" id="IPR002300">
    <property type="entry name" value="aa-tRNA-synth_Ia"/>
</dbReference>
<dbReference type="InterPro" id="IPR002302">
    <property type="entry name" value="Leu-tRNA-ligase"/>
</dbReference>
<dbReference type="InterPro" id="IPR025709">
    <property type="entry name" value="Leu_tRNA-synth_edit"/>
</dbReference>
<dbReference type="InterPro" id="IPR013155">
    <property type="entry name" value="M/V/L/I-tRNA-synth_anticd-bd"/>
</dbReference>
<dbReference type="InterPro" id="IPR015413">
    <property type="entry name" value="Methionyl/Leucyl_tRNA_Synth"/>
</dbReference>
<dbReference type="InterPro" id="IPR014729">
    <property type="entry name" value="Rossmann-like_a/b/a_fold"/>
</dbReference>
<dbReference type="InterPro" id="IPR009080">
    <property type="entry name" value="tRNAsynth_Ia_anticodon-bd"/>
</dbReference>
<dbReference type="InterPro" id="IPR009008">
    <property type="entry name" value="Val/Leu/Ile-tRNA-synth_edit"/>
</dbReference>
<dbReference type="NCBIfam" id="TIGR00396">
    <property type="entry name" value="leuS_bact"/>
    <property type="match status" value="1"/>
</dbReference>
<dbReference type="PANTHER" id="PTHR43740:SF2">
    <property type="entry name" value="LEUCINE--TRNA LIGASE, MITOCHONDRIAL"/>
    <property type="match status" value="1"/>
</dbReference>
<dbReference type="PANTHER" id="PTHR43740">
    <property type="entry name" value="LEUCYL-TRNA SYNTHETASE"/>
    <property type="match status" value="1"/>
</dbReference>
<dbReference type="Pfam" id="PF08264">
    <property type="entry name" value="Anticodon_1"/>
    <property type="match status" value="1"/>
</dbReference>
<dbReference type="Pfam" id="PF00133">
    <property type="entry name" value="tRNA-synt_1"/>
    <property type="match status" value="2"/>
</dbReference>
<dbReference type="Pfam" id="PF13603">
    <property type="entry name" value="tRNA-synt_1_2"/>
    <property type="match status" value="1"/>
</dbReference>
<dbReference type="Pfam" id="PF09334">
    <property type="entry name" value="tRNA-synt_1g"/>
    <property type="match status" value="1"/>
</dbReference>
<dbReference type="PRINTS" id="PR00985">
    <property type="entry name" value="TRNASYNTHLEU"/>
</dbReference>
<dbReference type="SUPFAM" id="SSF47323">
    <property type="entry name" value="Anticodon-binding domain of a subclass of class I aminoacyl-tRNA synthetases"/>
    <property type="match status" value="1"/>
</dbReference>
<dbReference type="SUPFAM" id="SSF52374">
    <property type="entry name" value="Nucleotidylyl transferase"/>
    <property type="match status" value="1"/>
</dbReference>
<dbReference type="SUPFAM" id="SSF50677">
    <property type="entry name" value="ValRS/IleRS/LeuRS editing domain"/>
    <property type="match status" value="1"/>
</dbReference>
<dbReference type="PROSITE" id="PS00178">
    <property type="entry name" value="AA_TRNA_LIGASE_I"/>
    <property type="match status" value="1"/>
</dbReference>
<proteinExistence type="inferred from homology"/>
<accession>A1V0G7</accession>